<organism>
    <name type="scientific">Helicobacter acinonychis (strain Sheeba)</name>
    <dbReference type="NCBI Taxonomy" id="382638"/>
    <lineage>
        <taxon>Bacteria</taxon>
        <taxon>Pseudomonadati</taxon>
        <taxon>Campylobacterota</taxon>
        <taxon>Epsilonproteobacteria</taxon>
        <taxon>Campylobacterales</taxon>
        <taxon>Helicobacteraceae</taxon>
        <taxon>Helicobacter</taxon>
    </lineage>
</organism>
<evidence type="ECO:0000255" key="1">
    <source>
        <dbReference type="HAMAP-Rule" id="MF_00818"/>
    </source>
</evidence>
<dbReference type="EC" id="1.7.1.13" evidence="1"/>
<dbReference type="EMBL" id="AM260522">
    <property type="protein sequence ID" value="CAJ98892.1"/>
    <property type="molecule type" value="Genomic_DNA"/>
</dbReference>
<dbReference type="RefSeq" id="WP_011577014.1">
    <property type="nucleotide sequence ID" value="NC_008229.1"/>
</dbReference>
<dbReference type="SMR" id="Q17ZN4"/>
<dbReference type="STRING" id="382638.Hac_0024"/>
<dbReference type="GeneID" id="31757580"/>
<dbReference type="KEGG" id="hac:Hac_0024"/>
<dbReference type="eggNOG" id="COG0780">
    <property type="taxonomic scope" value="Bacteria"/>
</dbReference>
<dbReference type="HOGENOM" id="CLU_102489_0_1_7"/>
<dbReference type="OrthoDB" id="9789995at2"/>
<dbReference type="BioCyc" id="HACI382638:HAC_RS00115-MONOMER"/>
<dbReference type="UniPathway" id="UPA00392"/>
<dbReference type="Proteomes" id="UP000000775">
    <property type="component" value="Chromosome"/>
</dbReference>
<dbReference type="GO" id="GO:0005737">
    <property type="term" value="C:cytoplasm"/>
    <property type="evidence" value="ECO:0007669"/>
    <property type="project" value="UniProtKB-SubCell"/>
</dbReference>
<dbReference type="GO" id="GO:0033739">
    <property type="term" value="F:preQ1 synthase activity"/>
    <property type="evidence" value="ECO:0007669"/>
    <property type="project" value="UniProtKB-UniRule"/>
</dbReference>
<dbReference type="GO" id="GO:0008616">
    <property type="term" value="P:queuosine biosynthetic process"/>
    <property type="evidence" value="ECO:0007669"/>
    <property type="project" value="UniProtKB-UniRule"/>
</dbReference>
<dbReference type="GO" id="GO:0006400">
    <property type="term" value="P:tRNA modification"/>
    <property type="evidence" value="ECO:0007669"/>
    <property type="project" value="UniProtKB-UniRule"/>
</dbReference>
<dbReference type="Gene3D" id="3.30.1130.10">
    <property type="match status" value="1"/>
</dbReference>
<dbReference type="HAMAP" id="MF_00818">
    <property type="entry name" value="QueF_type1"/>
    <property type="match status" value="1"/>
</dbReference>
<dbReference type="InterPro" id="IPR043133">
    <property type="entry name" value="GTP-CH-I_C/QueF"/>
</dbReference>
<dbReference type="InterPro" id="IPR050084">
    <property type="entry name" value="NADPH_dep_7-cyano-7-deazaG_red"/>
</dbReference>
<dbReference type="InterPro" id="IPR029500">
    <property type="entry name" value="QueF"/>
</dbReference>
<dbReference type="InterPro" id="IPR016856">
    <property type="entry name" value="QueF_type1"/>
</dbReference>
<dbReference type="NCBIfam" id="TIGR03139">
    <property type="entry name" value="QueF-II"/>
    <property type="match status" value="1"/>
</dbReference>
<dbReference type="PANTHER" id="PTHR34354">
    <property type="entry name" value="NADPH-DEPENDENT 7-CYANO-7-DEAZAGUANINE REDUCTASE"/>
    <property type="match status" value="1"/>
</dbReference>
<dbReference type="PANTHER" id="PTHR34354:SF1">
    <property type="entry name" value="NADPH-DEPENDENT 7-CYANO-7-DEAZAGUANINE REDUCTASE"/>
    <property type="match status" value="1"/>
</dbReference>
<dbReference type="Pfam" id="PF14489">
    <property type="entry name" value="QueF"/>
    <property type="match status" value="1"/>
</dbReference>
<dbReference type="PIRSF" id="PIRSF027377">
    <property type="entry name" value="Nitrile_oxidored_QueF"/>
    <property type="match status" value="1"/>
</dbReference>
<dbReference type="SUPFAM" id="SSF55620">
    <property type="entry name" value="Tetrahydrobiopterin biosynthesis enzymes-like"/>
    <property type="match status" value="1"/>
</dbReference>
<protein>
    <recommendedName>
        <fullName evidence="1">NADPH-dependent 7-cyano-7-deazaguanine reductase</fullName>
        <ecNumber evidence="1">1.7.1.13</ecNumber>
    </recommendedName>
    <alternativeName>
        <fullName evidence="1">7-cyano-7-carbaguanine reductase</fullName>
    </alternativeName>
    <alternativeName>
        <fullName evidence="1">NADPH-dependent nitrile oxidoreductase</fullName>
    </alternativeName>
    <alternativeName>
        <fullName evidence="1">PreQ(0) reductase</fullName>
    </alternativeName>
</protein>
<comment type="function">
    <text evidence="1">Catalyzes the NADPH-dependent reduction of 7-cyano-7-deazaguanine (preQ0) to 7-aminomethyl-7-deazaguanine (preQ1).</text>
</comment>
<comment type="catalytic activity">
    <reaction evidence="1">
        <text>7-aminomethyl-7-carbaguanine + 2 NADP(+) = 7-cyano-7-deazaguanine + 2 NADPH + 3 H(+)</text>
        <dbReference type="Rhea" id="RHEA:13409"/>
        <dbReference type="ChEBI" id="CHEBI:15378"/>
        <dbReference type="ChEBI" id="CHEBI:45075"/>
        <dbReference type="ChEBI" id="CHEBI:57783"/>
        <dbReference type="ChEBI" id="CHEBI:58349"/>
        <dbReference type="ChEBI" id="CHEBI:58703"/>
        <dbReference type="EC" id="1.7.1.13"/>
    </reaction>
</comment>
<comment type="pathway">
    <text evidence="1">tRNA modification; tRNA-queuosine biosynthesis.</text>
</comment>
<comment type="subcellular location">
    <subcellularLocation>
        <location evidence="1">Cytoplasm</location>
    </subcellularLocation>
</comment>
<comment type="similarity">
    <text evidence="1">Belongs to the GTP cyclohydrolase I family. QueF type 1 subfamily.</text>
</comment>
<accession>Q17ZN4</accession>
<reference key="1">
    <citation type="journal article" date="2006" name="PLoS Genet.">
        <title>Who ate whom? Adaptive Helicobacter genomic changes that accompanied a host jump from early humans to large felines.</title>
        <authorList>
            <person name="Eppinger M."/>
            <person name="Baar C."/>
            <person name="Linz B."/>
            <person name="Raddatz G."/>
            <person name="Lanz C."/>
            <person name="Keller H."/>
            <person name="Morelli G."/>
            <person name="Gressmann H."/>
            <person name="Achtman M."/>
            <person name="Schuster S.C."/>
        </authorList>
    </citation>
    <scope>NUCLEOTIDE SEQUENCE [LARGE SCALE GENOMIC DNA]</scope>
    <source>
        <strain>Sheeba</strain>
    </source>
</reference>
<keyword id="KW-0963">Cytoplasm</keyword>
<keyword id="KW-0521">NADP</keyword>
<keyword id="KW-0560">Oxidoreductase</keyword>
<keyword id="KW-0671">Queuosine biosynthesis</keyword>
<proteinExistence type="inferred from homology"/>
<sequence>MSSELNLKLLGTKTPYIFEYNKDLLEAFPNPNPNLDPLITLECKEFTSLCPITSQPDFGVVYIRYIPKDKMVESKSLKLYLFSYRNHGSFHESCINTILLDLVGLLEPKYLEVYGDFVSRGGIAIKPFVNYAIKEYQDFKEKRLLGAK</sequence>
<name>QUEF_HELAH</name>
<gene>
    <name evidence="1" type="primary">queF</name>
    <name type="ordered locus">Hac_0024</name>
</gene>
<feature type="chain" id="PRO_1000062387" description="NADPH-dependent 7-cyano-7-deazaguanine reductase">
    <location>
        <begin position="1"/>
        <end position="148"/>
    </location>
</feature>
<feature type="active site" description="Thioimide intermediate" evidence="1">
    <location>
        <position position="50"/>
    </location>
</feature>
<feature type="active site" description="Proton donor" evidence="1">
    <location>
        <position position="57"/>
    </location>
</feature>
<feature type="binding site" evidence="1">
    <location>
        <begin position="72"/>
        <end position="74"/>
    </location>
    <ligand>
        <name>substrate</name>
    </ligand>
</feature>
<feature type="binding site" evidence="1">
    <location>
        <begin position="91"/>
        <end position="92"/>
    </location>
    <ligand>
        <name>substrate</name>
    </ligand>
</feature>